<organism>
    <name type="scientific">Acidobacterium capsulatum (strain ATCC 51196 / DSM 11244 / BCRC 80197 / JCM 7670 / NBRC 15755 / NCIMB 13165 / 161)</name>
    <dbReference type="NCBI Taxonomy" id="240015"/>
    <lineage>
        <taxon>Bacteria</taxon>
        <taxon>Pseudomonadati</taxon>
        <taxon>Acidobacteriota</taxon>
        <taxon>Terriglobia</taxon>
        <taxon>Terriglobales</taxon>
        <taxon>Acidobacteriaceae</taxon>
        <taxon>Acidobacterium</taxon>
    </lineage>
</organism>
<keyword id="KW-0963">Cytoplasm</keyword>
<keyword id="KW-0488">Methylation</keyword>
<keyword id="KW-0648">Protein biosynthesis</keyword>
<keyword id="KW-1185">Reference proteome</keyword>
<name>RF1_ACIC5</name>
<proteinExistence type="inferred from homology"/>
<accession>C1F2J1</accession>
<dbReference type="EMBL" id="CP001472">
    <property type="protein sequence ID" value="ACO31733.1"/>
    <property type="molecule type" value="Genomic_DNA"/>
</dbReference>
<dbReference type="RefSeq" id="WP_015897716.1">
    <property type="nucleotide sequence ID" value="NC_012483.1"/>
</dbReference>
<dbReference type="SMR" id="C1F2J1"/>
<dbReference type="FunCoup" id="C1F2J1">
    <property type="interactions" value="487"/>
</dbReference>
<dbReference type="STRING" id="240015.ACP_2651"/>
<dbReference type="KEGG" id="aca:ACP_2651"/>
<dbReference type="eggNOG" id="COG0216">
    <property type="taxonomic scope" value="Bacteria"/>
</dbReference>
<dbReference type="HOGENOM" id="CLU_036856_0_1_0"/>
<dbReference type="InParanoid" id="C1F2J1"/>
<dbReference type="OrthoDB" id="9806673at2"/>
<dbReference type="Proteomes" id="UP000002207">
    <property type="component" value="Chromosome"/>
</dbReference>
<dbReference type="GO" id="GO:0005737">
    <property type="term" value="C:cytoplasm"/>
    <property type="evidence" value="ECO:0007669"/>
    <property type="project" value="UniProtKB-SubCell"/>
</dbReference>
<dbReference type="GO" id="GO:0016149">
    <property type="term" value="F:translation release factor activity, codon specific"/>
    <property type="evidence" value="ECO:0007669"/>
    <property type="project" value="UniProtKB-UniRule"/>
</dbReference>
<dbReference type="FunFam" id="3.30.160.20:FF:000004">
    <property type="entry name" value="Peptide chain release factor 1"/>
    <property type="match status" value="1"/>
</dbReference>
<dbReference type="FunFam" id="3.30.70.1660:FF:000002">
    <property type="entry name" value="Peptide chain release factor 1"/>
    <property type="match status" value="1"/>
</dbReference>
<dbReference type="FunFam" id="3.30.70.1660:FF:000004">
    <property type="entry name" value="Peptide chain release factor 1"/>
    <property type="match status" value="1"/>
</dbReference>
<dbReference type="Gene3D" id="3.30.160.20">
    <property type="match status" value="1"/>
</dbReference>
<dbReference type="Gene3D" id="3.30.70.1660">
    <property type="match status" value="1"/>
</dbReference>
<dbReference type="Gene3D" id="6.10.140.1950">
    <property type="match status" value="1"/>
</dbReference>
<dbReference type="HAMAP" id="MF_00093">
    <property type="entry name" value="Rel_fac_1"/>
    <property type="match status" value="1"/>
</dbReference>
<dbReference type="InterPro" id="IPR005139">
    <property type="entry name" value="PCRF"/>
</dbReference>
<dbReference type="InterPro" id="IPR000352">
    <property type="entry name" value="Pep_chain_release_fac_I"/>
</dbReference>
<dbReference type="InterPro" id="IPR045853">
    <property type="entry name" value="Pep_chain_release_fac_I_sf"/>
</dbReference>
<dbReference type="InterPro" id="IPR050057">
    <property type="entry name" value="Prokaryotic/Mito_RF"/>
</dbReference>
<dbReference type="InterPro" id="IPR004373">
    <property type="entry name" value="RF-1"/>
</dbReference>
<dbReference type="NCBIfam" id="TIGR00019">
    <property type="entry name" value="prfA"/>
    <property type="match status" value="1"/>
</dbReference>
<dbReference type="NCBIfam" id="NF001859">
    <property type="entry name" value="PRK00591.1"/>
    <property type="match status" value="1"/>
</dbReference>
<dbReference type="PANTHER" id="PTHR43804">
    <property type="entry name" value="LD18447P"/>
    <property type="match status" value="1"/>
</dbReference>
<dbReference type="PANTHER" id="PTHR43804:SF7">
    <property type="entry name" value="LD18447P"/>
    <property type="match status" value="1"/>
</dbReference>
<dbReference type="Pfam" id="PF03462">
    <property type="entry name" value="PCRF"/>
    <property type="match status" value="1"/>
</dbReference>
<dbReference type="Pfam" id="PF00472">
    <property type="entry name" value="RF-1"/>
    <property type="match status" value="1"/>
</dbReference>
<dbReference type="SMART" id="SM00937">
    <property type="entry name" value="PCRF"/>
    <property type="match status" value="1"/>
</dbReference>
<dbReference type="SUPFAM" id="SSF75620">
    <property type="entry name" value="Release factor"/>
    <property type="match status" value="1"/>
</dbReference>
<comment type="function">
    <text evidence="1">Peptide chain release factor 1 directs the termination of translation in response to the peptide chain termination codons UAG and UAA.</text>
</comment>
<comment type="subcellular location">
    <subcellularLocation>
        <location evidence="1">Cytoplasm</location>
    </subcellularLocation>
</comment>
<comment type="PTM">
    <text evidence="1">Methylated by PrmC. Methylation increases the termination efficiency of RF1.</text>
</comment>
<comment type="similarity">
    <text evidence="1">Belongs to the prokaryotic/mitochondrial release factor family.</text>
</comment>
<feature type="chain" id="PRO_1000193462" description="Peptide chain release factor 1">
    <location>
        <begin position="1"/>
        <end position="358"/>
    </location>
</feature>
<feature type="modified residue" description="N5-methylglutamine" evidence="1">
    <location>
        <position position="232"/>
    </location>
</feature>
<protein>
    <recommendedName>
        <fullName evidence="1">Peptide chain release factor 1</fullName>
        <shortName evidence="1">RF-1</shortName>
    </recommendedName>
</protein>
<reference key="1">
    <citation type="journal article" date="2009" name="Appl. Environ. Microbiol.">
        <title>Three genomes from the phylum Acidobacteria provide insight into the lifestyles of these microorganisms in soils.</title>
        <authorList>
            <person name="Ward N.L."/>
            <person name="Challacombe J.F."/>
            <person name="Janssen P.H."/>
            <person name="Henrissat B."/>
            <person name="Coutinho P.M."/>
            <person name="Wu M."/>
            <person name="Xie G."/>
            <person name="Haft D.H."/>
            <person name="Sait M."/>
            <person name="Badger J."/>
            <person name="Barabote R.D."/>
            <person name="Bradley B."/>
            <person name="Brettin T.S."/>
            <person name="Brinkac L.M."/>
            <person name="Bruce D."/>
            <person name="Creasy T."/>
            <person name="Daugherty S.C."/>
            <person name="Davidsen T.M."/>
            <person name="DeBoy R.T."/>
            <person name="Detter J.C."/>
            <person name="Dodson R.J."/>
            <person name="Durkin A.S."/>
            <person name="Ganapathy A."/>
            <person name="Gwinn-Giglio M."/>
            <person name="Han C.S."/>
            <person name="Khouri H."/>
            <person name="Kiss H."/>
            <person name="Kothari S.P."/>
            <person name="Madupu R."/>
            <person name="Nelson K.E."/>
            <person name="Nelson W.C."/>
            <person name="Paulsen I."/>
            <person name="Penn K."/>
            <person name="Ren Q."/>
            <person name="Rosovitz M.J."/>
            <person name="Selengut J.D."/>
            <person name="Shrivastava S."/>
            <person name="Sullivan S.A."/>
            <person name="Tapia R."/>
            <person name="Thompson L.S."/>
            <person name="Watkins K.L."/>
            <person name="Yang Q."/>
            <person name="Yu C."/>
            <person name="Zafar N."/>
            <person name="Zhou L."/>
            <person name="Kuske C.R."/>
        </authorList>
    </citation>
    <scope>NUCLEOTIDE SEQUENCE [LARGE SCALE GENOMIC DNA]</scope>
    <source>
        <strain>ATCC 51196 / DSM 11244 / BCRC 80197 / JCM 7670 / NBRC 15755 / NCIMB 13165 / 161</strain>
    </source>
</reference>
<gene>
    <name evidence="1" type="primary">prfA</name>
    <name type="ordered locus">ACP_2651</name>
</gene>
<evidence type="ECO:0000255" key="1">
    <source>
        <dbReference type="HAMAP-Rule" id="MF_00093"/>
    </source>
</evidence>
<sequence>MFERLEQIETRYEELGREMADPALIADQQKYQKTAKQHRELEDVVEKFREYREVQNGIADARGMMNEADAEIRAMAEEELASLEERLPQIEADLKLLLLPKDPNDEKNVVVEIRAGTGGDEASLFAAEVFRMYARYAEQRRWKVEVLSMSESSVGGAKEVIAIIEGDHVYSQMKYESGVHRVQRVPATETQGRVHTSAITVAVLPEAEEVDVKIEAKDLRIDTFCSSGPGGQSVNTTYSAVRITHLPTNTVVSCQDEKSQIKNREKAMRVLRSRLYEVEMERQQQALAKERKQQVGSGDRSEKIRTYNFPQNRLTDHRIGLTIHQLAEVMEGRLQPVIDALTAHFNAERLKAESEAVA</sequence>